<evidence type="ECO:0000255" key="1">
    <source>
        <dbReference type="HAMAP-Rule" id="MF_00834"/>
    </source>
</evidence>
<dbReference type="EC" id="2.6.1.62" evidence="1"/>
<dbReference type="EMBL" id="L42023">
    <property type="protein sequence ID" value="AAC23203.1"/>
    <property type="molecule type" value="Genomic_DNA"/>
</dbReference>
<dbReference type="PIR" id="E64129">
    <property type="entry name" value="E64129"/>
</dbReference>
<dbReference type="RefSeq" id="NP_439703.1">
    <property type="nucleotide sequence ID" value="NC_000907.1"/>
</dbReference>
<dbReference type="SMR" id="P44426"/>
<dbReference type="STRING" id="71421.HI_1554"/>
<dbReference type="EnsemblBacteria" id="AAC23203">
    <property type="protein sequence ID" value="AAC23203"/>
    <property type="gene ID" value="HI_1554"/>
</dbReference>
<dbReference type="KEGG" id="hin:HI_1554"/>
<dbReference type="PATRIC" id="fig|71421.8.peg.1625"/>
<dbReference type="eggNOG" id="COG0161">
    <property type="taxonomic scope" value="Bacteria"/>
</dbReference>
<dbReference type="HOGENOM" id="CLU_016922_4_3_6"/>
<dbReference type="OrthoDB" id="9801052at2"/>
<dbReference type="PhylomeDB" id="P44426"/>
<dbReference type="BioCyc" id="HINF71421:G1GJ1-1574-MONOMER"/>
<dbReference type="UniPathway" id="UPA00078">
    <property type="reaction ID" value="UER00160"/>
</dbReference>
<dbReference type="Proteomes" id="UP000000579">
    <property type="component" value="Chromosome"/>
</dbReference>
<dbReference type="GO" id="GO:0005737">
    <property type="term" value="C:cytoplasm"/>
    <property type="evidence" value="ECO:0007669"/>
    <property type="project" value="UniProtKB-SubCell"/>
</dbReference>
<dbReference type="GO" id="GO:0004015">
    <property type="term" value="F:adenosylmethionine-8-amino-7-oxononanoate transaminase activity"/>
    <property type="evidence" value="ECO:0000318"/>
    <property type="project" value="GO_Central"/>
</dbReference>
<dbReference type="GO" id="GO:0030170">
    <property type="term" value="F:pyridoxal phosphate binding"/>
    <property type="evidence" value="ECO:0007669"/>
    <property type="project" value="UniProtKB-UniRule"/>
</dbReference>
<dbReference type="GO" id="GO:0009102">
    <property type="term" value="P:biotin biosynthetic process"/>
    <property type="evidence" value="ECO:0000318"/>
    <property type="project" value="GO_Central"/>
</dbReference>
<dbReference type="CDD" id="cd00610">
    <property type="entry name" value="OAT_like"/>
    <property type="match status" value="1"/>
</dbReference>
<dbReference type="FunFam" id="3.40.640.10:FF:000041">
    <property type="entry name" value="Adenosylmethionine-8-amino-7-oxononanoate aminotransferase"/>
    <property type="match status" value="1"/>
</dbReference>
<dbReference type="Gene3D" id="3.90.1150.10">
    <property type="entry name" value="Aspartate Aminotransferase, domain 1"/>
    <property type="match status" value="1"/>
</dbReference>
<dbReference type="Gene3D" id="3.40.640.10">
    <property type="entry name" value="Type I PLP-dependent aspartate aminotransferase-like (Major domain)"/>
    <property type="match status" value="1"/>
</dbReference>
<dbReference type="HAMAP" id="MF_00834">
    <property type="entry name" value="BioA"/>
    <property type="match status" value="1"/>
</dbReference>
<dbReference type="InterPro" id="IPR005814">
    <property type="entry name" value="Aminotrans_3"/>
</dbReference>
<dbReference type="InterPro" id="IPR049704">
    <property type="entry name" value="Aminotrans_3_PPA_site"/>
</dbReference>
<dbReference type="InterPro" id="IPR005815">
    <property type="entry name" value="BioA"/>
</dbReference>
<dbReference type="InterPro" id="IPR015424">
    <property type="entry name" value="PyrdxlP-dep_Trfase"/>
</dbReference>
<dbReference type="InterPro" id="IPR015421">
    <property type="entry name" value="PyrdxlP-dep_Trfase_major"/>
</dbReference>
<dbReference type="InterPro" id="IPR015422">
    <property type="entry name" value="PyrdxlP-dep_Trfase_small"/>
</dbReference>
<dbReference type="NCBIfam" id="TIGR00508">
    <property type="entry name" value="bioA"/>
    <property type="match status" value="1"/>
</dbReference>
<dbReference type="NCBIfam" id="NF004624">
    <property type="entry name" value="PRK05964.1"/>
    <property type="match status" value="1"/>
</dbReference>
<dbReference type="NCBIfam" id="NF005940">
    <property type="entry name" value="PRK07986.1"/>
    <property type="match status" value="1"/>
</dbReference>
<dbReference type="PANTHER" id="PTHR42684">
    <property type="entry name" value="ADENOSYLMETHIONINE-8-AMINO-7-OXONONANOATE AMINOTRANSFERASE"/>
    <property type="match status" value="1"/>
</dbReference>
<dbReference type="PANTHER" id="PTHR42684:SF17">
    <property type="entry name" value="ADENOSYLMETHIONINE-8-AMINO-7-OXONONANOATE AMINOTRANSFERASE"/>
    <property type="match status" value="1"/>
</dbReference>
<dbReference type="Pfam" id="PF00202">
    <property type="entry name" value="Aminotran_3"/>
    <property type="match status" value="1"/>
</dbReference>
<dbReference type="PIRSF" id="PIRSF000521">
    <property type="entry name" value="Transaminase_4ab_Lys_Orn"/>
    <property type="match status" value="1"/>
</dbReference>
<dbReference type="SUPFAM" id="SSF53383">
    <property type="entry name" value="PLP-dependent transferases"/>
    <property type="match status" value="1"/>
</dbReference>
<dbReference type="PROSITE" id="PS00600">
    <property type="entry name" value="AA_TRANSFER_CLASS_3"/>
    <property type="match status" value="1"/>
</dbReference>
<organism>
    <name type="scientific">Haemophilus influenzae (strain ATCC 51907 / DSM 11121 / KW20 / Rd)</name>
    <dbReference type="NCBI Taxonomy" id="71421"/>
    <lineage>
        <taxon>Bacteria</taxon>
        <taxon>Pseudomonadati</taxon>
        <taxon>Pseudomonadota</taxon>
        <taxon>Gammaproteobacteria</taxon>
        <taxon>Pasteurellales</taxon>
        <taxon>Pasteurellaceae</taxon>
        <taxon>Haemophilus</taxon>
    </lineage>
</organism>
<gene>
    <name evidence="1" type="primary">bioA</name>
    <name type="ordered locus">HI_1554</name>
</gene>
<name>BIOA_HAEIN</name>
<comment type="function">
    <text evidence="1">Catalyzes the transfer of the alpha-amino group from S-adenosyl-L-methionine (SAM) to 7-keto-8-aminopelargonic acid (KAPA) to form 7,8-diaminopelargonic acid (DAPA). It is the only aminotransferase known to utilize SAM as an amino donor.</text>
</comment>
<comment type="catalytic activity">
    <reaction evidence="1">
        <text>(8S)-8-amino-7-oxononanoate + S-adenosyl-L-methionine = S-adenosyl-4-methylsulfanyl-2-oxobutanoate + (7R,8S)-7,8-diammoniononanoate</text>
        <dbReference type="Rhea" id="RHEA:16861"/>
        <dbReference type="ChEBI" id="CHEBI:16490"/>
        <dbReference type="ChEBI" id="CHEBI:59789"/>
        <dbReference type="ChEBI" id="CHEBI:149468"/>
        <dbReference type="ChEBI" id="CHEBI:149469"/>
        <dbReference type="EC" id="2.6.1.62"/>
    </reaction>
</comment>
<comment type="cofactor">
    <cofactor evidence="1">
        <name>pyridoxal 5'-phosphate</name>
        <dbReference type="ChEBI" id="CHEBI:597326"/>
    </cofactor>
</comment>
<comment type="pathway">
    <text evidence="1">Cofactor biosynthesis; biotin biosynthesis; 7,8-diaminononanoate from 8-amino-7-oxononanoate (SAM route): step 1/1.</text>
</comment>
<comment type="subunit">
    <text evidence="1">Homodimer.</text>
</comment>
<comment type="subcellular location">
    <subcellularLocation>
        <location evidence="1">Cytoplasm</location>
    </subcellularLocation>
</comment>
<comment type="similarity">
    <text evidence="1">Belongs to the class-III pyridoxal-phosphate-dependent aminotransferase family. BioA subfamily.</text>
</comment>
<accession>P44426</accession>
<keyword id="KW-0032">Aminotransferase</keyword>
<keyword id="KW-0093">Biotin biosynthesis</keyword>
<keyword id="KW-0963">Cytoplasm</keyword>
<keyword id="KW-0663">Pyridoxal phosphate</keyword>
<keyword id="KW-1185">Reference proteome</keyword>
<keyword id="KW-0949">S-adenosyl-L-methionine</keyword>
<keyword id="KW-0808">Transferase</keyword>
<reference key="1">
    <citation type="journal article" date="1995" name="Science">
        <title>Whole-genome random sequencing and assembly of Haemophilus influenzae Rd.</title>
        <authorList>
            <person name="Fleischmann R.D."/>
            <person name="Adams M.D."/>
            <person name="White O."/>
            <person name="Clayton R.A."/>
            <person name="Kirkness E.F."/>
            <person name="Kerlavage A.R."/>
            <person name="Bult C.J."/>
            <person name="Tomb J.-F."/>
            <person name="Dougherty B.A."/>
            <person name="Merrick J.M."/>
            <person name="McKenney K."/>
            <person name="Sutton G.G."/>
            <person name="FitzHugh W."/>
            <person name="Fields C.A."/>
            <person name="Gocayne J.D."/>
            <person name="Scott J.D."/>
            <person name="Shirley R."/>
            <person name="Liu L.-I."/>
            <person name="Glodek A."/>
            <person name="Kelley J.M."/>
            <person name="Weidman J.F."/>
            <person name="Phillips C.A."/>
            <person name="Spriggs T."/>
            <person name="Hedblom E."/>
            <person name="Cotton M.D."/>
            <person name="Utterback T.R."/>
            <person name="Hanna M.C."/>
            <person name="Nguyen D.T."/>
            <person name="Saudek D.M."/>
            <person name="Brandon R.C."/>
            <person name="Fine L.D."/>
            <person name="Fritchman J.L."/>
            <person name="Fuhrmann J.L."/>
            <person name="Geoghagen N.S.M."/>
            <person name="Gnehm C.L."/>
            <person name="McDonald L.A."/>
            <person name="Small K.V."/>
            <person name="Fraser C.M."/>
            <person name="Smith H.O."/>
            <person name="Venter J.C."/>
        </authorList>
    </citation>
    <scope>NUCLEOTIDE SEQUENCE [LARGE SCALE GENOMIC DNA]</scope>
    <source>
        <strain>ATCC 51907 / DSM 11121 / KW20 / Rd</strain>
    </source>
</reference>
<proteinExistence type="inferred from homology"/>
<protein>
    <recommendedName>
        <fullName evidence="1">Adenosylmethionine-8-amino-7-oxononanoate aminotransferase</fullName>
        <ecNumber evidence="1">2.6.1.62</ecNumber>
    </recommendedName>
    <alternativeName>
        <fullName evidence="1">7,8-diamino-pelargonic acid aminotransferase</fullName>
        <shortName evidence="1">DAPA AT</shortName>
        <shortName evidence="1">DAPA aminotransferase</shortName>
    </alternativeName>
    <alternativeName>
        <fullName evidence="1">7,8-diaminononanoate synthase</fullName>
        <shortName evidence="1">DANS</shortName>
    </alternativeName>
    <alternativeName>
        <fullName evidence="1">Diaminopelargonic acid synthase</fullName>
    </alternativeName>
</protein>
<sequence>MVDEQSLLAFDTQHIWHPYSSVSSDMPLYAVERADGVMITLKDGRRLIDGMSSWWAALHGYNHPRLNAAAQNQLAKMSHIMFGGFTHDPAVELAQLLVQILPNGLDKIFFADSGSVAVEVAMKMAIQYQHAKGEVQRQKFATIRSGYHGDTWNAMSVCDPTTGMHHLFHHSLPVQYFLPQPNIPFNESWNDCAIEPLADLLKKKGNEIAALILEPVVQGAGGMYFYSPTYLVKAQALCKQYGILLIFDEIATGFGRTGKLFAAEHAGISPDIMCIGKALTGGYLTLSASITTTEIAQTICSGEAKCFMHGPTFMANPLACAIAAESIRLLLESPWQQNIQRIESSLKQQLSPLSEKDYVKEVRALGAIGVVEMKSAVNMKTLVPRFVEQGVWIRPFGKLVYVMPPFVIKDDELQKLTEGMILALTQEYEH</sequence>
<feature type="chain" id="PRO_0000120369" description="Adenosylmethionine-8-amino-7-oxononanoate aminotransferase">
    <location>
        <begin position="1"/>
        <end position="430"/>
    </location>
</feature>
<feature type="binding site" evidence="1">
    <location>
        <position position="54"/>
    </location>
    <ligand>
        <name>substrate</name>
    </ligand>
</feature>
<feature type="binding site" evidence="1">
    <location>
        <begin position="114"/>
        <end position="115"/>
    </location>
    <ligand>
        <name>pyridoxal 5'-phosphate</name>
        <dbReference type="ChEBI" id="CHEBI:597326"/>
    </ligand>
</feature>
<feature type="binding site" evidence="1">
    <location>
        <position position="147"/>
    </location>
    <ligand>
        <name>substrate</name>
    </ligand>
</feature>
<feature type="binding site" evidence="1">
    <location>
        <position position="248"/>
    </location>
    <ligand>
        <name>pyridoxal 5'-phosphate</name>
        <dbReference type="ChEBI" id="CHEBI:597326"/>
    </ligand>
</feature>
<feature type="binding site" evidence="1">
    <location>
        <position position="277"/>
    </location>
    <ligand>
        <name>substrate</name>
    </ligand>
</feature>
<feature type="binding site" evidence="1">
    <location>
        <position position="310"/>
    </location>
    <ligand>
        <name>substrate</name>
    </ligand>
</feature>
<feature type="binding site" evidence="1">
    <location>
        <begin position="311"/>
        <end position="312"/>
    </location>
    <ligand>
        <name>pyridoxal 5'-phosphate</name>
        <dbReference type="ChEBI" id="CHEBI:597326"/>
    </ligand>
</feature>
<feature type="binding site" evidence="1">
    <location>
        <position position="394"/>
    </location>
    <ligand>
        <name>substrate</name>
    </ligand>
</feature>
<feature type="site" description="Participates in the substrate recognition with KAPA and in a stacking interaction with the adenine ring of SAM" evidence="1">
    <location>
        <position position="19"/>
    </location>
</feature>
<feature type="modified residue" description="N6-(pyridoxal phosphate)lysine" evidence="1">
    <location>
        <position position="277"/>
    </location>
</feature>